<organism>
    <name type="scientific">Escherichia coli O6:H1 (strain CFT073 / ATCC 700928 / UPEC)</name>
    <dbReference type="NCBI Taxonomy" id="199310"/>
    <lineage>
        <taxon>Bacteria</taxon>
        <taxon>Pseudomonadati</taxon>
        <taxon>Pseudomonadota</taxon>
        <taxon>Gammaproteobacteria</taxon>
        <taxon>Enterobacterales</taxon>
        <taxon>Enterobacteriaceae</taxon>
        <taxon>Escherichia</taxon>
    </lineage>
</organism>
<keyword id="KW-0436">Ligase</keyword>
<keyword id="KW-1185">Reference proteome</keyword>
<evidence type="ECO:0000255" key="1">
    <source>
        <dbReference type="HAMAP-Rule" id="MF_01524"/>
    </source>
</evidence>
<evidence type="ECO:0000305" key="2"/>
<proteinExistence type="inferred from homology"/>
<reference key="1">
    <citation type="journal article" date="2002" name="Proc. Natl. Acad. Sci. U.S.A.">
        <title>Extensive mosaic structure revealed by the complete genome sequence of uropathogenic Escherichia coli.</title>
        <authorList>
            <person name="Welch R.A."/>
            <person name="Burland V."/>
            <person name="Plunkett G. III"/>
            <person name="Redford P."/>
            <person name="Roesch P."/>
            <person name="Rasko D."/>
            <person name="Buckles E.L."/>
            <person name="Liou S.-R."/>
            <person name="Boutin A."/>
            <person name="Hackett J."/>
            <person name="Stroud D."/>
            <person name="Mayhew G.F."/>
            <person name="Rose D.J."/>
            <person name="Zhou S."/>
            <person name="Schwartz D.C."/>
            <person name="Perna N.T."/>
            <person name="Mobley H.L.T."/>
            <person name="Donnenberg M.S."/>
            <person name="Blattner F.R."/>
        </authorList>
    </citation>
    <scope>NUCLEOTIDE SEQUENCE [LARGE SCALE GENOMIC DNA]</scope>
    <source>
        <strain>CFT073 / ATCC 700928 / UPEC</strain>
    </source>
</reference>
<name>CAIC_ECOL6</name>
<comment type="function">
    <text evidence="1">Catalyzes the transfer of CoA to carnitine, generating the initial carnitinyl-CoA needed for the CaiB reaction cycle. Also has activity toward crotonobetaine and gamma-butyrobetaine.</text>
</comment>
<comment type="catalytic activity">
    <reaction evidence="1">
        <text>4-(trimethylamino)butanoate + ATP + CoA = 4-(trimethylamino)butanoyl-CoA + AMP + diphosphate</text>
        <dbReference type="Rhea" id="RHEA:55960"/>
        <dbReference type="ChEBI" id="CHEBI:16244"/>
        <dbReference type="ChEBI" id="CHEBI:30616"/>
        <dbReference type="ChEBI" id="CHEBI:33019"/>
        <dbReference type="ChEBI" id="CHEBI:57287"/>
        <dbReference type="ChEBI" id="CHEBI:61513"/>
        <dbReference type="ChEBI" id="CHEBI:456215"/>
        <dbReference type="EC" id="6.2.1.48"/>
    </reaction>
</comment>
<comment type="catalytic activity">
    <reaction evidence="1">
        <text>crotonobetaine + ATP + CoA = crotonobetainyl-CoA + AMP + diphosphate</text>
        <dbReference type="Rhea" id="RHEA:30079"/>
        <dbReference type="ChEBI" id="CHEBI:17237"/>
        <dbReference type="ChEBI" id="CHEBI:30616"/>
        <dbReference type="ChEBI" id="CHEBI:33019"/>
        <dbReference type="ChEBI" id="CHEBI:57287"/>
        <dbReference type="ChEBI" id="CHEBI:60933"/>
        <dbReference type="ChEBI" id="CHEBI:456215"/>
        <dbReference type="EC" id="6.2.1.48"/>
    </reaction>
</comment>
<comment type="catalytic activity">
    <reaction evidence="1">
        <text>(R)-carnitine + ATP + CoA = (R)-carnitinyl-CoA + AMP + diphosphate</text>
        <dbReference type="Rhea" id="RHEA:28514"/>
        <dbReference type="ChEBI" id="CHEBI:16347"/>
        <dbReference type="ChEBI" id="CHEBI:30616"/>
        <dbReference type="ChEBI" id="CHEBI:33019"/>
        <dbReference type="ChEBI" id="CHEBI:57287"/>
        <dbReference type="ChEBI" id="CHEBI:60932"/>
        <dbReference type="ChEBI" id="CHEBI:456215"/>
        <dbReference type="EC" id="6.2.1.48"/>
    </reaction>
</comment>
<comment type="pathway">
    <text evidence="1">Amine and polyamine metabolism; carnitine metabolism.</text>
</comment>
<comment type="similarity">
    <text evidence="1">Belongs to the ATP-dependent AMP-binding enzyme family.</text>
</comment>
<comment type="sequence caution" evidence="2">
    <conflict type="erroneous initiation">
        <sequence resource="EMBL-CDS" id="AAN78544"/>
    </conflict>
</comment>
<protein>
    <recommendedName>
        <fullName evidence="1">Crotonobetaine/carnitine--CoA ligase</fullName>
        <ecNumber evidence="1">6.2.1.48</ecNumber>
    </recommendedName>
</protein>
<sequence length="517" mass="58655">MDIIGGQHLRQMWDDLADVYGHKTALICESSSGVVNRYSYLELNQEINRTANLFYTLGIRKGDKVALHLDNCPEFIFCWFGLAKIGAIMVPINARLLREESTWILQNSQACLLVTSAQFYPMYQQIQQEDASQLRHICLTDMVLPADDGVSSFTQLKNQQPATLCYAPPLSTDDTAEILFTSGTTSRPKGVVITHYNLRFAGYYSAWQCALRDDDVYLTVMPAFHIDCQCTAAMAAFSAGATFVLVEKYSARAFWGQVQKYRATITECIPMMIRTLMVQPLSANDQQHRLREVMFYLNLSEQEKDAFCERFSVRLLTSYGMTETIVGIIGDRPGDKRRWPSIGRAGFCYEAEIRDDHNRPLPAGELGEICIKGVPGKTIFKEYFLNPKATAKVLEADGWLHTGDTGYRDEEGFFYFVDRRCNMIKRGGENVSCVELENIIATHPKIQDIVVVGIKDSIRDEAIKAFVVLNEGETLSEEEFFCFCEQNMAKFKVPSYLEIRKDLPRNCSGKIIRKNLK</sequence>
<feature type="chain" id="PRO_0000193066" description="Crotonobetaine/carnitine--CoA ligase">
    <location>
        <begin position="1"/>
        <end position="517"/>
    </location>
</feature>
<gene>
    <name evidence="1" type="primary">caiC</name>
    <name type="ordered locus">c0046</name>
</gene>
<dbReference type="EC" id="6.2.1.48" evidence="1"/>
<dbReference type="EMBL" id="AE014075">
    <property type="protein sequence ID" value="AAN78544.1"/>
    <property type="status" value="ALT_INIT"/>
    <property type="molecule type" value="Genomic_DNA"/>
</dbReference>
<dbReference type="RefSeq" id="WP_001298634.1">
    <property type="nucleotide sequence ID" value="NZ_CP051263.1"/>
</dbReference>
<dbReference type="SMR" id="Q8FLA5"/>
<dbReference type="STRING" id="199310.c0046"/>
<dbReference type="KEGG" id="ecc:c0046"/>
<dbReference type="eggNOG" id="COG0318">
    <property type="taxonomic scope" value="Bacteria"/>
</dbReference>
<dbReference type="HOGENOM" id="CLU_000022_59_0_6"/>
<dbReference type="UniPathway" id="UPA00117"/>
<dbReference type="Proteomes" id="UP000001410">
    <property type="component" value="Chromosome"/>
</dbReference>
<dbReference type="GO" id="GO:0051108">
    <property type="term" value="F:carnitine-CoA ligase activity"/>
    <property type="evidence" value="ECO:0007669"/>
    <property type="project" value="InterPro"/>
</dbReference>
<dbReference type="GO" id="GO:0051109">
    <property type="term" value="F:crotonobetaine-CoA ligase activity"/>
    <property type="evidence" value="ECO:0007669"/>
    <property type="project" value="InterPro"/>
</dbReference>
<dbReference type="GO" id="GO:0031956">
    <property type="term" value="F:medium-chain fatty acid-CoA ligase activity"/>
    <property type="evidence" value="ECO:0007669"/>
    <property type="project" value="TreeGrafter"/>
</dbReference>
<dbReference type="GO" id="GO:0009437">
    <property type="term" value="P:carnitine metabolic process"/>
    <property type="evidence" value="ECO:0007669"/>
    <property type="project" value="UniProtKB-UniRule"/>
</dbReference>
<dbReference type="GO" id="GO:0006631">
    <property type="term" value="P:fatty acid metabolic process"/>
    <property type="evidence" value="ECO:0007669"/>
    <property type="project" value="TreeGrafter"/>
</dbReference>
<dbReference type="CDD" id="cd05934">
    <property type="entry name" value="FACL_DitJ_like"/>
    <property type="match status" value="1"/>
</dbReference>
<dbReference type="FunFam" id="3.30.300.30:FF:000011">
    <property type="entry name" value="Crotonobetaine/carnitine--CoA ligase"/>
    <property type="match status" value="1"/>
</dbReference>
<dbReference type="FunFam" id="3.40.50.12780:FF:000017">
    <property type="entry name" value="Crotonobetaine/carnitine--CoA ligase"/>
    <property type="match status" value="1"/>
</dbReference>
<dbReference type="Gene3D" id="3.30.300.30">
    <property type="match status" value="1"/>
</dbReference>
<dbReference type="Gene3D" id="3.40.50.12780">
    <property type="entry name" value="N-terminal domain of ligase-like"/>
    <property type="match status" value="1"/>
</dbReference>
<dbReference type="HAMAP" id="MF_01524">
    <property type="entry name" value="CaiC"/>
    <property type="match status" value="1"/>
</dbReference>
<dbReference type="InterPro" id="IPR025110">
    <property type="entry name" value="AMP-bd_C"/>
</dbReference>
<dbReference type="InterPro" id="IPR045851">
    <property type="entry name" value="AMP-bd_C_sf"/>
</dbReference>
<dbReference type="InterPro" id="IPR020845">
    <property type="entry name" value="AMP-binding_CS"/>
</dbReference>
<dbReference type="InterPro" id="IPR000873">
    <property type="entry name" value="AMP-dep_synth/lig_dom"/>
</dbReference>
<dbReference type="InterPro" id="IPR042099">
    <property type="entry name" value="ANL_N_sf"/>
</dbReference>
<dbReference type="InterPro" id="IPR023456">
    <property type="entry name" value="CaiC"/>
</dbReference>
<dbReference type="NCBIfam" id="NF005947">
    <property type="entry name" value="PRK08008.1"/>
    <property type="match status" value="1"/>
</dbReference>
<dbReference type="PANTHER" id="PTHR43201">
    <property type="entry name" value="ACYL-COA SYNTHETASE"/>
    <property type="match status" value="1"/>
</dbReference>
<dbReference type="PANTHER" id="PTHR43201:SF5">
    <property type="entry name" value="MEDIUM-CHAIN ACYL-COA LIGASE ACSF2, MITOCHONDRIAL"/>
    <property type="match status" value="1"/>
</dbReference>
<dbReference type="Pfam" id="PF00501">
    <property type="entry name" value="AMP-binding"/>
    <property type="match status" value="1"/>
</dbReference>
<dbReference type="Pfam" id="PF13193">
    <property type="entry name" value="AMP-binding_C"/>
    <property type="match status" value="1"/>
</dbReference>
<dbReference type="SUPFAM" id="SSF56801">
    <property type="entry name" value="Acetyl-CoA synthetase-like"/>
    <property type="match status" value="1"/>
</dbReference>
<dbReference type="PROSITE" id="PS00455">
    <property type="entry name" value="AMP_BINDING"/>
    <property type="match status" value="1"/>
</dbReference>
<accession>Q8FLA5</accession>